<evidence type="ECO:0000255" key="1"/>
<evidence type="ECO:0000255" key="2">
    <source>
        <dbReference type="PROSITE-ProRule" id="PRU00076"/>
    </source>
</evidence>
<evidence type="ECO:0000255" key="3">
    <source>
        <dbReference type="PROSITE-ProRule" id="PRU00384"/>
    </source>
</evidence>
<evidence type="ECO:0000255" key="4">
    <source>
        <dbReference type="PROSITE-ProRule" id="PRU00498"/>
    </source>
</evidence>
<evidence type="ECO:0000256" key="5">
    <source>
        <dbReference type="SAM" id="MobiDB-lite"/>
    </source>
</evidence>
<evidence type="ECO:0000269" key="6">
    <source>
    </source>
</evidence>
<evidence type="ECO:0000269" key="7">
    <source>
    </source>
</evidence>
<evidence type="ECO:0000269" key="8">
    <source>
    </source>
</evidence>
<evidence type="ECO:0000269" key="9">
    <source>
    </source>
</evidence>
<evidence type="ECO:0000269" key="10">
    <source>
    </source>
</evidence>
<evidence type="ECO:0000269" key="11">
    <source>
    </source>
</evidence>
<evidence type="ECO:0000269" key="12">
    <source>
    </source>
</evidence>
<evidence type="ECO:0000269" key="13">
    <source>
    </source>
</evidence>
<evidence type="ECO:0000269" key="14">
    <source>
    </source>
</evidence>
<evidence type="ECO:0000269" key="15">
    <source>
    </source>
</evidence>
<evidence type="ECO:0000269" key="16">
    <source>
    </source>
</evidence>
<evidence type="ECO:0000269" key="17">
    <source>
    </source>
</evidence>
<evidence type="ECO:0000269" key="18">
    <source>
    </source>
</evidence>
<evidence type="ECO:0000269" key="19">
    <source>
    </source>
</evidence>
<evidence type="ECO:0000269" key="20">
    <source>
    </source>
</evidence>
<evidence type="ECO:0000269" key="21">
    <source>
    </source>
</evidence>
<evidence type="ECO:0000269" key="22">
    <source>
    </source>
</evidence>
<evidence type="ECO:0000269" key="23">
    <source>
    </source>
</evidence>
<evidence type="ECO:0000269" key="24">
    <source>
    </source>
</evidence>
<evidence type="ECO:0000269" key="25">
    <source>
    </source>
</evidence>
<evidence type="ECO:0000269" key="26">
    <source>
    </source>
</evidence>
<evidence type="ECO:0000269" key="27">
    <source>
    </source>
</evidence>
<evidence type="ECO:0000269" key="28">
    <source>
    </source>
</evidence>
<evidence type="ECO:0000269" key="29">
    <source>
    </source>
</evidence>
<evidence type="ECO:0000269" key="30">
    <source ref="27"/>
</evidence>
<evidence type="ECO:0000303" key="31">
    <source>
    </source>
</evidence>
<evidence type="ECO:0000303" key="32">
    <source>
    </source>
</evidence>
<evidence type="ECO:0000305" key="33"/>
<evidence type="ECO:0000312" key="34">
    <source>
        <dbReference type="EMBL" id="ABF85754.1"/>
    </source>
</evidence>
<evidence type="ECO:0000312" key="35">
    <source>
        <dbReference type="EMBL" id="ACH92235.1"/>
    </source>
</evidence>
<evidence type="ECO:0000312" key="36">
    <source>
        <dbReference type="FlyBase" id="FBgn0027594"/>
    </source>
</evidence>
<evidence type="ECO:0000312" key="37">
    <source>
        <dbReference type="Proteomes" id="UP000000803"/>
    </source>
</evidence>
<protein>
    <recommendedName>
        <fullName evidence="36">Protein draper</fullName>
    </recommendedName>
</protein>
<organism evidence="37">
    <name type="scientific">Drosophila melanogaster</name>
    <name type="common">Fruit fly</name>
    <dbReference type="NCBI Taxonomy" id="7227"/>
    <lineage>
        <taxon>Eukaryota</taxon>
        <taxon>Metazoa</taxon>
        <taxon>Ecdysozoa</taxon>
        <taxon>Arthropoda</taxon>
        <taxon>Hexapoda</taxon>
        <taxon>Insecta</taxon>
        <taxon>Pterygota</taxon>
        <taxon>Neoptera</taxon>
        <taxon>Endopterygota</taxon>
        <taxon>Diptera</taxon>
        <taxon>Brachycera</taxon>
        <taxon>Muscomorpha</taxon>
        <taxon>Ephydroidea</taxon>
        <taxon>Drosophilidae</taxon>
        <taxon>Drosophila</taxon>
        <taxon>Sophophora</taxon>
    </lineage>
</organism>
<reference evidence="37" key="1">
    <citation type="journal article" date="2000" name="Science">
        <title>The genome sequence of Drosophila melanogaster.</title>
        <authorList>
            <person name="Adams M.D."/>
            <person name="Celniker S.E."/>
            <person name="Holt R.A."/>
            <person name="Evans C.A."/>
            <person name="Gocayne J.D."/>
            <person name="Amanatides P.G."/>
            <person name="Scherer S.E."/>
            <person name="Li P.W."/>
            <person name="Hoskins R.A."/>
            <person name="Galle R.F."/>
            <person name="George R.A."/>
            <person name="Lewis S.E."/>
            <person name="Richards S."/>
            <person name="Ashburner M."/>
            <person name="Henderson S.N."/>
            <person name="Sutton G.G."/>
            <person name="Wortman J.R."/>
            <person name="Yandell M.D."/>
            <person name="Zhang Q."/>
            <person name="Chen L.X."/>
            <person name="Brandon R.C."/>
            <person name="Rogers Y.-H.C."/>
            <person name="Blazej R.G."/>
            <person name="Champe M."/>
            <person name="Pfeiffer B.D."/>
            <person name="Wan K.H."/>
            <person name="Doyle C."/>
            <person name="Baxter E.G."/>
            <person name="Helt G."/>
            <person name="Nelson C.R."/>
            <person name="Miklos G.L.G."/>
            <person name="Abril J.F."/>
            <person name="Agbayani A."/>
            <person name="An H.-J."/>
            <person name="Andrews-Pfannkoch C."/>
            <person name="Baldwin D."/>
            <person name="Ballew R.M."/>
            <person name="Basu A."/>
            <person name="Baxendale J."/>
            <person name="Bayraktaroglu L."/>
            <person name="Beasley E.M."/>
            <person name="Beeson K.Y."/>
            <person name="Benos P.V."/>
            <person name="Berman B.P."/>
            <person name="Bhandari D."/>
            <person name="Bolshakov S."/>
            <person name="Borkova D."/>
            <person name="Botchan M.R."/>
            <person name="Bouck J."/>
            <person name="Brokstein P."/>
            <person name="Brottier P."/>
            <person name="Burtis K.C."/>
            <person name="Busam D.A."/>
            <person name="Butler H."/>
            <person name="Cadieu E."/>
            <person name="Center A."/>
            <person name="Chandra I."/>
            <person name="Cherry J.M."/>
            <person name="Cawley S."/>
            <person name="Dahlke C."/>
            <person name="Davenport L.B."/>
            <person name="Davies P."/>
            <person name="de Pablos B."/>
            <person name="Delcher A."/>
            <person name="Deng Z."/>
            <person name="Mays A.D."/>
            <person name="Dew I."/>
            <person name="Dietz S.M."/>
            <person name="Dodson K."/>
            <person name="Doup L.E."/>
            <person name="Downes M."/>
            <person name="Dugan-Rocha S."/>
            <person name="Dunkov B.C."/>
            <person name="Dunn P."/>
            <person name="Durbin K.J."/>
            <person name="Evangelista C.C."/>
            <person name="Ferraz C."/>
            <person name="Ferriera S."/>
            <person name="Fleischmann W."/>
            <person name="Fosler C."/>
            <person name="Gabrielian A.E."/>
            <person name="Garg N.S."/>
            <person name="Gelbart W.M."/>
            <person name="Glasser K."/>
            <person name="Glodek A."/>
            <person name="Gong F."/>
            <person name="Gorrell J.H."/>
            <person name="Gu Z."/>
            <person name="Guan P."/>
            <person name="Harris M."/>
            <person name="Harris N.L."/>
            <person name="Harvey D.A."/>
            <person name="Heiman T.J."/>
            <person name="Hernandez J.R."/>
            <person name="Houck J."/>
            <person name="Hostin D."/>
            <person name="Houston K.A."/>
            <person name="Howland T.J."/>
            <person name="Wei M.-H."/>
            <person name="Ibegwam C."/>
            <person name="Jalali M."/>
            <person name="Kalush F."/>
            <person name="Karpen G.H."/>
            <person name="Ke Z."/>
            <person name="Kennison J.A."/>
            <person name="Ketchum K.A."/>
            <person name="Kimmel B.E."/>
            <person name="Kodira C.D."/>
            <person name="Kraft C.L."/>
            <person name="Kravitz S."/>
            <person name="Kulp D."/>
            <person name="Lai Z."/>
            <person name="Lasko P."/>
            <person name="Lei Y."/>
            <person name="Levitsky A.A."/>
            <person name="Li J.H."/>
            <person name="Li Z."/>
            <person name="Liang Y."/>
            <person name="Lin X."/>
            <person name="Liu X."/>
            <person name="Mattei B."/>
            <person name="McIntosh T.C."/>
            <person name="McLeod M.P."/>
            <person name="McPherson D."/>
            <person name="Merkulov G."/>
            <person name="Milshina N.V."/>
            <person name="Mobarry C."/>
            <person name="Morris J."/>
            <person name="Moshrefi A."/>
            <person name="Mount S.M."/>
            <person name="Moy M."/>
            <person name="Murphy B."/>
            <person name="Murphy L."/>
            <person name="Muzny D.M."/>
            <person name="Nelson D.L."/>
            <person name="Nelson D.R."/>
            <person name="Nelson K.A."/>
            <person name="Nixon K."/>
            <person name="Nusskern D.R."/>
            <person name="Pacleb J.M."/>
            <person name="Palazzolo M."/>
            <person name="Pittman G.S."/>
            <person name="Pan S."/>
            <person name="Pollard J."/>
            <person name="Puri V."/>
            <person name="Reese M.G."/>
            <person name="Reinert K."/>
            <person name="Remington K."/>
            <person name="Saunders R.D.C."/>
            <person name="Scheeler F."/>
            <person name="Shen H."/>
            <person name="Shue B.C."/>
            <person name="Siden-Kiamos I."/>
            <person name="Simpson M."/>
            <person name="Skupski M.P."/>
            <person name="Smith T.J."/>
            <person name="Spier E."/>
            <person name="Spradling A.C."/>
            <person name="Stapleton M."/>
            <person name="Strong R."/>
            <person name="Sun E."/>
            <person name="Svirskas R."/>
            <person name="Tector C."/>
            <person name="Turner R."/>
            <person name="Venter E."/>
            <person name="Wang A.H."/>
            <person name="Wang X."/>
            <person name="Wang Z.-Y."/>
            <person name="Wassarman D.A."/>
            <person name="Weinstock G.M."/>
            <person name="Weissenbach J."/>
            <person name="Williams S.M."/>
            <person name="Woodage T."/>
            <person name="Worley K.C."/>
            <person name="Wu D."/>
            <person name="Yang S."/>
            <person name="Yao Q.A."/>
            <person name="Ye J."/>
            <person name="Yeh R.-F."/>
            <person name="Zaveri J.S."/>
            <person name="Zhan M."/>
            <person name="Zhang G."/>
            <person name="Zhao Q."/>
            <person name="Zheng L."/>
            <person name="Zheng X.H."/>
            <person name="Zhong F.N."/>
            <person name="Zhong W."/>
            <person name="Zhou X."/>
            <person name="Zhu S.C."/>
            <person name="Zhu X."/>
            <person name="Smith H.O."/>
            <person name="Gibbs R.A."/>
            <person name="Myers E.W."/>
            <person name="Rubin G.M."/>
            <person name="Venter J.C."/>
        </authorList>
    </citation>
    <scope>NUCLEOTIDE SEQUENCE [LARGE SCALE GENOMIC DNA]</scope>
    <source>
        <strain evidence="37">Berkeley</strain>
    </source>
</reference>
<reference evidence="37" key="2">
    <citation type="journal article" date="2002" name="Genome Biol.">
        <title>Annotation of the Drosophila melanogaster euchromatic genome: a systematic review.</title>
        <authorList>
            <person name="Misra S."/>
            <person name="Crosby M.A."/>
            <person name="Mungall C.J."/>
            <person name="Matthews B.B."/>
            <person name="Campbell K.S."/>
            <person name="Hradecky P."/>
            <person name="Huang Y."/>
            <person name="Kaminker J.S."/>
            <person name="Millburn G.H."/>
            <person name="Prochnik S.E."/>
            <person name="Smith C.D."/>
            <person name="Tupy J.L."/>
            <person name="Whitfield E.J."/>
            <person name="Bayraktaroglu L."/>
            <person name="Berman B.P."/>
            <person name="Bettencourt B.R."/>
            <person name="Celniker S.E."/>
            <person name="de Grey A.D.N.J."/>
            <person name="Drysdale R.A."/>
            <person name="Harris N.L."/>
            <person name="Richter J."/>
            <person name="Russo S."/>
            <person name="Schroeder A.J."/>
            <person name="Shu S.Q."/>
            <person name="Stapleton M."/>
            <person name="Yamada C."/>
            <person name="Ashburner M."/>
            <person name="Gelbart W.M."/>
            <person name="Rubin G.M."/>
            <person name="Lewis S.E."/>
        </authorList>
    </citation>
    <scope>GENOME REANNOTATION</scope>
    <source>
        <strain evidence="37">Berkeley</strain>
    </source>
</reference>
<reference evidence="34 35" key="3">
    <citation type="submission" date="2008-09" db="EMBL/GenBank/DDBJ databases">
        <authorList>
            <person name="Carlson J."/>
            <person name="Booth B."/>
            <person name="Frise E."/>
            <person name="Park S."/>
            <person name="Wan K."/>
            <person name="Yu C."/>
            <person name="Celniker S."/>
        </authorList>
    </citation>
    <scope>NUCLEOTIDE SEQUENCE [LARGE SCALE MRNA] (ISOFORMS A AND B)</scope>
    <source>
        <strain evidence="34 35">Berkeley</strain>
    </source>
</reference>
<reference evidence="33" key="4">
    <citation type="journal article" date="2003" name="Neuron">
        <title>Unwrapping glial biology: Gcm target genes regulating glial development, diversification, and function.</title>
        <authorList>
            <person name="Freeman M.R."/>
            <person name="Delrow J."/>
            <person name="Kim J."/>
            <person name="Johnson E."/>
            <person name="Doe C.Q."/>
        </authorList>
    </citation>
    <scope>IDENTIFICATION</scope>
    <scope>FUNCTION</scope>
    <scope>SUBCELLULAR LOCATION</scope>
    <scope>DISRUPTION PHENOTYPE</scope>
</reference>
<reference evidence="33" key="5">
    <citation type="journal article" date="2004" name="J. Biol. Chem.">
        <title>Draper-mediated and phosphatidylserine-independent phagocytosis of apoptotic cells by Drosophila hemocytes/macrophages.</title>
        <authorList>
            <person name="Manaka J."/>
            <person name="Kuraishi T."/>
            <person name="Shiratsuchi A."/>
            <person name="Nakai Y."/>
            <person name="Higashida H."/>
            <person name="Henson P."/>
            <person name="Nakanishi Y."/>
        </authorList>
    </citation>
    <scope>FUNCTION</scope>
    <scope>DISRUPTION PHENOTYPE</scope>
</reference>
<reference evidence="33" key="6">
    <citation type="journal article" date="2006" name="Neuron">
        <title>Essential role of the apoptotic cell engulfment genes draper and ced-6 in programmed axon pruning during Drosophila metamorphosis.</title>
        <authorList>
            <person name="Awasaki T."/>
            <person name="Tatsumi R."/>
            <person name="Takahashi K."/>
            <person name="Arai K."/>
            <person name="Nakanishi Y."/>
            <person name="Ueda R."/>
            <person name="Ito K."/>
        </authorList>
    </citation>
    <scope>FUNCTION</scope>
    <scope>INTERACTION WITH CED-6</scope>
    <scope>TISSUE SPECIFICITY</scope>
    <scope>DEVELOPMENTAL STAGE</scope>
    <scope>INDUCTION BY ECDYSONE</scope>
    <scope>DISRUPTION PHENOTYPE</scope>
</reference>
<reference evidence="33" key="7">
    <citation type="journal article" date="2006" name="Neuron">
        <title>The Drosophila cell corpse engulfment receptor Draper mediates glial clearance of severed axons.</title>
        <authorList>
            <person name="MacDonald J.M."/>
            <person name="Beach M.G."/>
            <person name="Porpiglia E."/>
            <person name="Sheehan A.E."/>
            <person name="Watts R.J."/>
            <person name="Freeman M.R."/>
        </authorList>
    </citation>
    <scope>FUNCTION</scope>
    <scope>SUBCELLULAR LOCATION</scope>
    <scope>TISSUE SPECIFICITY</scope>
    <scope>INDUCTION BY INJURY</scope>
    <scope>DISRUPTION PHENOTYPE</scope>
</reference>
<reference evidence="33" key="8">
    <citation type="journal article" date="2006" name="Neuron">
        <title>Wlds protection distinguishes axon degeneration following injury from naturally occurring developmental pruning.</title>
        <authorList>
            <person name="Hoopfer E.D."/>
            <person name="McLaughlin T."/>
            <person name="Watts R.J."/>
            <person name="Schuldiner O."/>
            <person name="O'Leary D.D."/>
            <person name="Luo L."/>
        </authorList>
    </citation>
    <scope>FUNCTION</scope>
    <scope>DISRUPTION PHENOTYPE</scope>
</reference>
<reference evidence="33" key="9">
    <citation type="journal article" date="2008" name="Cell">
        <title>Six-microns-under acts upstream of Draper in the glial phagocytosis of apoptotic neurons.</title>
        <authorList>
            <person name="Kurant E."/>
            <person name="Axelrod S."/>
            <person name="Leaman D."/>
            <person name="Gaul U."/>
        </authorList>
    </citation>
    <scope>FUNCTION</scope>
    <scope>SUBCELLULAR LOCATION</scope>
    <scope>TISSUE SPECIFICITY</scope>
    <scope>DISRUPTION PHENOTYPE</scope>
</reference>
<reference evidence="33" key="10">
    <citation type="journal article" date="2008" name="Cell">
        <title>Undertaker, a Drosophila Junctophilin, links Draper-mediated phagocytosis and calcium homeostasis.</title>
        <authorList>
            <person name="Cuttell L."/>
            <person name="Vaughan A."/>
            <person name="Silva E."/>
            <person name="Escaron C.J."/>
            <person name="Lavine M."/>
            <person name="Van Goethem E."/>
            <person name="Eid J.P."/>
            <person name="Quirin M."/>
            <person name="Franc N.C."/>
        </authorList>
    </citation>
    <scope>FUNCTION</scope>
</reference>
<reference evidence="33" key="11">
    <citation type="journal article" date="2008" name="Nature">
        <title>Draper-dependent glial phagocytic activity is mediated by Src and Syk family kinase signalling.</title>
        <authorList>
            <person name="Ziegenfuss J.S."/>
            <person name="Biswas R."/>
            <person name="Avery M.A."/>
            <person name="Hong K."/>
            <person name="Sheehan A.E."/>
            <person name="Yeung Y.G."/>
            <person name="Stanley E.R."/>
            <person name="Freeman M.R."/>
        </authorList>
    </citation>
    <scope>FUNCTION</scope>
    <scope>INTERACTION WITH SHARK</scope>
    <scope>PHOSPHORYLATION</scope>
    <scope>MUTAGENESIS OF TYR-949</scope>
</reference>
<reference evidence="33" key="12">
    <citation type="journal article" date="2009" name="EMBO J.">
        <title>Pretaporter, a Drosophila protein serving as a ligand for Draper in the phagocytosis of apoptotic cells.</title>
        <authorList>
            <person name="Kuraishi T."/>
            <person name="Nakagawa Y."/>
            <person name="Nagaosa K."/>
            <person name="Hashimoto Y."/>
            <person name="Ishimoto T."/>
            <person name="Moki T."/>
            <person name="Fujita Y."/>
            <person name="Nakayama H."/>
            <person name="Dohmae N."/>
            <person name="Shiratsuchi A."/>
            <person name="Yamamoto N."/>
            <person name="Ueda K."/>
            <person name="Yamaguchi M."/>
            <person name="Awasaki T."/>
            <person name="Nakanishi Y."/>
        </authorList>
    </citation>
    <scope>FUNCTION</scope>
    <scope>PHOSPHORYLATION</scope>
</reference>
<reference evidence="33" key="13">
    <citation type="journal article" date="2009" name="J. Immunol.">
        <title>Identification of lipoteichoic acid as a ligand for draper in the phagocytosis of Staphylococcus aureus by Drosophila hemocytes.</title>
        <authorList>
            <person name="Hashimoto Y."/>
            <person name="Tabuchi Y."/>
            <person name="Sakurai K."/>
            <person name="Kutsuna M."/>
            <person name="Kurokawa K."/>
            <person name="Awasaki T."/>
            <person name="Sekimizu K."/>
            <person name="Nakanishi Y."/>
            <person name="Shiratsuchi A."/>
        </authorList>
    </citation>
    <scope>FUNCTION</scope>
    <scope>DISRUPTION PHENOTYPE</scope>
</reference>
<reference evidence="33" key="14">
    <citation type="journal article" date="2009" name="PLoS Biol.">
        <title>Glia and muscle sculpt neuromuscular arbors by engulfing destabilized synaptic boutons and shed presynaptic debris.</title>
        <authorList>
            <person name="Fuentes-Medel Y."/>
            <person name="Logan M.A."/>
            <person name="Ashley J."/>
            <person name="Ataman B."/>
            <person name="Budnik V."/>
            <person name="Freeman M.R."/>
        </authorList>
    </citation>
    <scope>FUNCTION</scope>
    <scope>SUBCELLULAR LOCATION</scope>
    <scope>DISRUPTION PHENOTYPE</scope>
</reference>
<reference evidence="33" key="15">
    <citation type="journal article" date="2010" name="Nature">
        <title>Activation of autophagy during cell death requires the engulfment receptor Draper.</title>
        <authorList>
            <person name="McPhee C.K."/>
            <person name="Logan M.A."/>
            <person name="Freeman M.R."/>
            <person name="Baehrecke E.H."/>
        </authorList>
    </citation>
    <scope>FUNCTION</scope>
    <scope>TISSUE SPECIFICITY</scope>
    <scope>DISRUPTION PHENOTYPE</scope>
</reference>
<reference evidence="33" key="16">
    <citation type="journal article" date="2012" name="Development">
        <title>Draper acts through the JNK pathway to control synchronous engulfment of dying germline cells by follicular epithelial cells.</title>
        <authorList>
            <person name="Etchegaray J.I."/>
            <person name="Timmons A.K."/>
            <person name="Klein A.P."/>
            <person name="Pritchett T.L."/>
            <person name="Welch E."/>
            <person name="Meehan T.L."/>
            <person name="Li C."/>
            <person name="McCall K."/>
        </authorList>
    </citation>
    <scope>FUNCTION</scope>
    <scope>SUBCELLULAR LOCATION</scope>
    <scope>TISSUE SPECIFICITY</scope>
    <scope>DISRUPTION PHENOTYPE</scope>
</reference>
<reference evidence="33" key="17">
    <citation type="journal article" date="2012" name="Drug Discov. Ther.">
        <title>Role of NPxY motif in Draper-mediated apoptotic cell clearance in Drosophila.</title>
        <authorList>
            <person name="Fujita Y."/>
            <person name="Nagaosa K."/>
            <person name="Shiratsuchi A."/>
            <person name="Nakanishi Y."/>
        </authorList>
    </citation>
    <scope>FUNCTION</scope>
    <scope>PHOSPHORYLATION</scope>
    <scope>MUTAGENESIS OF TYR-858 AND TYR-949</scope>
</reference>
<reference evidence="33" key="18">
    <citation type="journal article" date="2012" name="Nat. Neurosci.">
        <title>Negative regulation of glial engulfment activity by Draper terminates glial responses to axon injury.</title>
        <authorList>
            <person name="Logan M.A."/>
            <person name="Hackett R."/>
            <person name="Doherty J."/>
            <person name="Sheehan A."/>
            <person name="Speese S.D."/>
            <person name="Freeman M.R."/>
        </authorList>
    </citation>
    <scope>FUNCTION (ISOFORMS A AND B)</scope>
    <scope>INTERACTION WITH CSW</scope>
    <scope>TISSUE SPECIFICITY</scope>
    <scope>DEVELOPMENTAL STAGE</scope>
    <scope>DOMAIN</scope>
    <scope>DEPHOSPHORYLATION</scope>
</reference>
<reference evidence="33" key="19">
    <citation type="journal article" date="2013" name="J. Biochem.">
        <title>Phosphatidylserine recognition and induction of apoptotic cell clearance by Drosophila engulfment receptor Draper.</title>
        <authorList>
            <person name="Tung T.T."/>
            <person name="Nagaosa K."/>
            <person name="Fujita Y."/>
            <person name="Kita A."/>
            <person name="Mori H."/>
            <person name="Okada R."/>
            <person name="Nonaka S."/>
            <person name="Nakanishi Y."/>
        </authorList>
    </citation>
    <scope>FUNCTION</scope>
    <scope>PHOSPHORYLATION</scope>
</reference>
<reference evidence="33" key="20">
    <citation type="journal article" date="2014" name="Am. J. Pathol.">
        <title>Silencing of drpr leads to muscle and brain degeneration in adult Drosophila.</title>
        <authorList>
            <person name="Draper I."/>
            <person name="Mahoney L.J."/>
            <person name="Mitsuhashi S."/>
            <person name="Pacak C.A."/>
            <person name="Salomon R.N."/>
            <person name="Kang P.B."/>
        </authorList>
    </citation>
    <scope>FUNCTION</scope>
    <scope>DISRUPTION PHENOTYPE</scope>
</reference>
<reference evidence="33" key="21">
    <citation type="journal article" date="2014" name="Neuron">
        <title>Epidermal cells are the primary phagocytes in the fragmentation and clearance of degenerating dendrites in Drosophila.</title>
        <authorList>
            <person name="Han C."/>
            <person name="Song Y."/>
            <person name="Xiao H."/>
            <person name="Wang D."/>
            <person name="Franc N.C."/>
            <person name="Jan L.Y."/>
            <person name="Jan Y.N."/>
        </authorList>
    </citation>
    <scope>FUNCTION</scope>
    <scope>DISRUPTION PHENOTYPE</scope>
</reference>
<reference evidence="33" key="22">
    <citation type="journal article" date="2015" name="Curr. Biol.">
        <title>Draper/CED-1 mediates an ancient damage response to control inflammatory blood cell migration in vivo.</title>
        <authorList>
            <person name="Evans I.R."/>
            <person name="Rodrigues F.S."/>
            <person name="Armitage E.L."/>
            <person name="Wood W."/>
        </authorList>
    </citation>
    <scope>FUNCTION</scope>
    <scope>DISRUPTION PHENOTYPE</scope>
    <scope>MUTAGENESIS OF TYR-949</scope>
</reference>
<reference evidence="33" key="23">
    <citation type="journal article" date="2016" name="Cell">
        <title>Corpse engulfment generates a molecular memory that primes the macrophage inflammatory response.</title>
        <authorList>
            <person name="Weavers H."/>
            <person name="Evans I.R."/>
            <person name="Martin P."/>
            <person name="Wood W."/>
        </authorList>
    </citation>
    <scope>FUNCTION</scope>
    <scope>SUBCELLULAR LOCATION</scope>
    <scope>DEVELOPMENTAL STAGE</scope>
</reference>
<reference evidence="33" key="24">
    <citation type="journal article" date="2016" name="Cell Rep.">
        <title>Insulin-like signaling promotes glial phagocytic clearance of degenerating axons through regulation of Draper.</title>
        <authorList>
            <person name="Musashe D.T."/>
            <person name="Purice M.D."/>
            <person name="Speese S.D."/>
            <person name="Doherty J."/>
            <person name="Logan M.A."/>
        </authorList>
    </citation>
    <scope>FUNCTION</scope>
</reference>
<reference evidence="33" key="25">
    <citation type="journal article" date="2016" name="PLoS ONE">
        <title>Components of the engulfment machinery have distinct roles in corpse processing.</title>
        <authorList>
            <person name="Meehan T.L."/>
            <person name="Joudi T.F."/>
            <person name="Timmons A.K."/>
            <person name="Taylor J.D."/>
            <person name="Habib C.S."/>
            <person name="Peterson J.S."/>
            <person name="Emmanuel S."/>
            <person name="Franc N.C."/>
            <person name="McCall K."/>
        </authorList>
    </citation>
    <scope>FUNCTION</scope>
    <scope>SUBCELLULAR LOCATION</scope>
</reference>
<reference key="26">
    <citation type="journal article" date="2019" name="FEBS Lett.">
        <title>The impact of Megf10/Drpr gain-of-function on muscle development in Drosophila.</title>
        <authorList>
            <person name="Draper I."/>
            <person name="Saha M."/>
            <person name="Stonebreaker H."/>
            <person name="Salomon R.N."/>
            <person name="Matin B."/>
            <person name="Kang P.B."/>
        </authorList>
    </citation>
    <scope>FUNCTION</scope>
</reference>
<reference key="27">
    <citation type="journal article" date="2019" name="Hum. Mol. Genet.">
        <title>Selective serotonin reuptake inhibitors ameliorate MEGF10 myopathy.</title>
        <authorList>
            <person name="Saha M."/>
            <person name="Rizzo S.A."/>
            <person name="Ramanathan M."/>
            <person name="Hightower R.M."/>
            <person name="Santostefano K.E."/>
            <person name="Terada N."/>
            <person name="Finkel R.S."/>
            <person name="Berg J.S."/>
            <person name="Chahin N."/>
            <person name="Pacak C.A."/>
            <person name="Wagner R.E."/>
            <person name="Alexander M.S."/>
            <person name="Draper I."/>
            <person name="Kang P.B."/>
        </authorList>
    </citation>
    <scope>FUNCTION</scope>
    <scope>DISRUPTION PHENOTYPE</scope>
</reference>
<reference key="28">
    <citation type="journal article" date="2021" name="PLoS Genet.">
        <title>bfc, a novel serpent co-factor for the expression of croquemort, regulates efferocytosis in Drosophila melanogaster.</title>
        <authorList>
            <person name="Zheng Q."/>
            <person name="Gao N."/>
            <person name="Sun Q."/>
            <person name="Li X."/>
            <person name="Wang Y."/>
            <person name="Xiao H."/>
        </authorList>
    </citation>
    <scope>INDUCTION BY APOPTOTIC CELLS</scope>
</reference>
<dbReference type="EMBL" id="AE014296">
    <property type="protein sequence ID" value="AAF47552.1"/>
    <property type="molecule type" value="Genomic_DNA"/>
</dbReference>
<dbReference type="EMBL" id="AE014296">
    <property type="protein sequence ID" value="AAF47553.3"/>
    <property type="molecule type" value="Genomic_DNA"/>
</dbReference>
<dbReference type="EMBL" id="AE014296">
    <property type="protein sequence ID" value="AFH04220.1"/>
    <property type="molecule type" value="Genomic_DNA"/>
</dbReference>
<dbReference type="EMBL" id="BT025854">
    <property type="protein sequence ID" value="ABF85754.1"/>
    <property type="molecule type" value="mRNA"/>
</dbReference>
<dbReference type="EMBL" id="BT044170">
    <property type="protein sequence ID" value="ACH92235.1"/>
    <property type="molecule type" value="mRNA"/>
</dbReference>
<dbReference type="RefSeq" id="NP_001246549.1">
    <molecule id="Q9W0A0-3"/>
    <property type="nucleotide sequence ID" value="NM_001259620.2"/>
</dbReference>
<dbReference type="RefSeq" id="NP_477450.1">
    <molecule id="Q9W0A0-2"/>
    <property type="nucleotide sequence ID" value="NM_058102.3"/>
</dbReference>
<dbReference type="RefSeq" id="NP_728660.2">
    <molecule id="Q9W0A0-1"/>
    <property type="nucleotide sequence ID" value="NM_167911.3"/>
</dbReference>
<dbReference type="SMR" id="Q9W0A0"/>
<dbReference type="DIP" id="DIP-19640N"/>
<dbReference type="FunCoup" id="Q9W0A0">
    <property type="interactions" value="91"/>
</dbReference>
<dbReference type="IntAct" id="Q9W0A0">
    <property type="interactions" value="3"/>
</dbReference>
<dbReference type="MINT" id="Q9W0A0"/>
<dbReference type="STRING" id="7227.FBpp0306204"/>
<dbReference type="GlyCosmos" id="Q9W0A0">
    <property type="glycosylation" value="14 sites, No reported glycans"/>
</dbReference>
<dbReference type="GlyGen" id="Q9W0A0">
    <property type="glycosylation" value="14 sites"/>
</dbReference>
<dbReference type="PaxDb" id="7227-FBpp0306204"/>
<dbReference type="DNASU" id="38218"/>
<dbReference type="EnsemblMetazoa" id="FBtr0072798">
    <molecule id="Q9W0A0-2"/>
    <property type="protein sequence ID" value="FBpp0072680"/>
    <property type="gene ID" value="FBgn0027594"/>
</dbReference>
<dbReference type="EnsemblMetazoa" id="FBtr0072799">
    <molecule id="Q9W0A0-1"/>
    <property type="protein sequence ID" value="FBpp0072681"/>
    <property type="gene ID" value="FBgn0027594"/>
</dbReference>
<dbReference type="EnsemblMetazoa" id="FBtr0309845">
    <molecule id="Q9W0A0-3"/>
    <property type="protein sequence ID" value="FBpp0301579"/>
    <property type="gene ID" value="FBgn0027594"/>
</dbReference>
<dbReference type="GeneID" id="38218"/>
<dbReference type="KEGG" id="dme:Dmel_CG2086"/>
<dbReference type="UCSC" id="CG2086-RA">
    <property type="organism name" value="d. melanogaster"/>
</dbReference>
<dbReference type="UCSC" id="CG2086-RB">
    <molecule id="Q9W0A0-1"/>
    <property type="organism name" value="d. melanogaster"/>
</dbReference>
<dbReference type="AGR" id="FB:FBgn0027594"/>
<dbReference type="CTD" id="38218"/>
<dbReference type="FlyBase" id="FBgn0027594">
    <property type="gene designation" value="drpr"/>
</dbReference>
<dbReference type="VEuPathDB" id="VectorBase:FBgn0027594"/>
<dbReference type="eggNOG" id="KOG0200">
    <property type="taxonomic scope" value="Eukaryota"/>
</dbReference>
<dbReference type="eggNOG" id="KOG1218">
    <property type="taxonomic scope" value="Eukaryota"/>
</dbReference>
<dbReference type="GeneTree" id="ENSGT00940000167451"/>
<dbReference type="InParanoid" id="Q9W0A0"/>
<dbReference type="OrthoDB" id="18487at2759"/>
<dbReference type="PhylomeDB" id="Q9W0A0"/>
<dbReference type="BioGRID-ORCS" id="38218">
    <property type="hits" value="0 hits in 3 CRISPR screens"/>
</dbReference>
<dbReference type="ChiTaRS" id="drpr">
    <property type="organism name" value="fly"/>
</dbReference>
<dbReference type="GenomeRNAi" id="38218"/>
<dbReference type="PRO" id="PR:Q9W0A0"/>
<dbReference type="Proteomes" id="UP000000803">
    <property type="component" value="Chromosome 3L"/>
</dbReference>
<dbReference type="Bgee" id="FBgn0027594">
    <property type="expression patterns" value="Expressed in hemocyte (sensu Nematoda and Protostomia) in testis and 253 other cell types or tissues"/>
</dbReference>
<dbReference type="ExpressionAtlas" id="Q9W0A0">
    <property type="expression patterns" value="baseline and differential"/>
</dbReference>
<dbReference type="GO" id="GO:0030424">
    <property type="term" value="C:axon"/>
    <property type="evidence" value="ECO:0000315"/>
    <property type="project" value="UniProtKB"/>
</dbReference>
<dbReference type="GO" id="GO:0005938">
    <property type="term" value="C:cell cortex"/>
    <property type="evidence" value="ECO:0007669"/>
    <property type="project" value="UniProtKB-SubCell"/>
</dbReference>
<dbReference type="GO" id="GO:0005737">
    <property type="term" value="C:cytoplasm"/>
    <property type="evidence" value="ECO:0000314"/>
    <property type="project" value="UniProtKB"/>
</dbReference>
<dbReference type="GO" id="GO:0016020">
    <property type="term" value="C:membrane"/>
    <property type="evidence" value="ECO:0000303"/>
    <property type="project" value="FlyBase"/>
</dbReference>
<dbReference type="GO" id="GO:0001891">
    <property type="term" value="C:phagocytic cup"/>
    <property type="evidence" value="ECO:0007669"/>
    <property type="project" value="UniProtKB-SubCell"/>
</dbReference>
<dbReference type="GO" id="GO:0045335">
    <property type="term" value="C:phagocytic vesicle"/>
    <property type="evidence" value="ECO:0007669"/>
    <property type="project" value="UniProtKB-SubCell"/>
</dbReference>
<dbReference type="GO" id="GO:0005886">
    <property type="term" value="C:plasma membrane"/>
    <property type="evidence" value="ECO:0000314"/>
    <property type="project" value="UniProtKB"/>
</dbReference>
<dbReference type="GO" id="GO:0098794">
    <property type="term" value="C:postsynapse"/>
    <property type="evidence" value="ECO:0000315"/>
    <property type="project" value="UniProtKB"/>
</dbReference>
<dbReference type="GO" id="GO:0045211">
    <property type="term" value="C:postsynaptic membrane"/>
    <property type="evidence" value="ECO:0007669"/>
    <property type="project" value="UniProtKB-SubCell"/>
</dbReference>
<dbReference type="GO" id="GO:0001786">
    <property type="term" value="F:phosphatidylserine binding"/>
    <property type="evidence" value="ECO:0000314"/>
    <property type="project" value="FlyBase"/>
</dbReference>
<dbReference type="GO" id="GO:0005044">
    <property type="term" value="F:scavenger receptor activity"/>
    <property type="evidence" value="ECO:0007669"/>
    <property type="project" value="InterPro"/>
</dbReference>
<dbReference type="GO" id="GO:0043277">
    <property type="term" value="P:apoptotic cell clearance"/>
    <property type="evidence" value="ECO:0000315"/>
    <property type="project" value="FlyBase"/>
</dbReference>
<dbReference type="GO" id="GO:0048102">
    <property type="term" value="P:autophagic cell death"/>
    <property type="evidence" value="ECO:0000315"/>
    <property type="project" value="FlyBase"/>
</dbReference>
<dbReference type="GO" id="GO:0035212">
    <property type="term" value="P:cell competition in a multicellular organism"/>
    <property type="evidence" value="ECO:0000315"/>
    <property type="project" value="FlyBase"/>
</dbReference>
<dbReference type="GO" id="GO:0042742">
    <property type="term" value="P:defense response to bacterium"/>
    <property type="evidence" value="ECO:0000315"/>
    <property type="project" value="FlyBase"/>
</dbReference>
<dbReference type="GO" id="GO:0043652">
    <property type="term" value="P:engulfment of apoptotic cell"/>
    <property type="evidence" value="ECO:0000315"/>
    <property type="project" value="FlyBase"/>
</dbReference>
<dbReference type="GO" id="GO:0008345">
    <property type="term" value="P:larval locomotory behavior"/>
    <property type="evidence" value="ECO:0000315"/>
    <property type="project" value="FlyBase"/>
</dbReference>
<dbReference type="GO" id="GO:0016322">
    <property type="term" value="P:neuron remodeling"/>
    <property type="evidence" value="ECO:0000315"/>
    <property type="project" value="UniProtKB"/>
</dbReference>
<dbReference type="GO" id="GO:0006909">
    <property type="term" value="P:phagocytosis"/>
    <property type="evidence" value="ECO:0000315"/>
    <property type="project" value="FlyBase"/>
</dbReference>
<dbReference type="GO" id="GO:0006911">
    <property type="term" value="P:phagocytosis, engulfment"/>
    <property type="evidence" value="ECO:0000315"/>
    <property type="project" value="FlyBase"/>
</dbReference>
<dbReference type="GO" id="GO:0106016">
    <property type="term" value="P:positive regulation of inflammatory response to wounding"/>
    <property type="evidence" value="ECO:0000316"/>
    <property type="project" value="FlyBase"/>
</dbReference>
<dbReference type="GO" id="GO:0060100">
    <property type="term" value="P:positive regulation of phagocytosis, engulfment"/>
    <property type="evidence" value="ECO:0000315"/>
    <property type="project" value="FlyBase"/>
</dbReference>
<dbReference type="GO" id="GO:1904396">
    <property type="term" value="P:regulation of neuromuscular junction development"/>
    <property type="evidence" value="ECO:0000315"/>
    <property type="project" value="UniProtKB"/>
</dbReference>
<dbReference type="GO" id="GO:0048678">
    <property type="term" value="P:response to axon injury"/>
    <property type="evidence" value="ECO:0000315"/>
    <property type="project" value="UniProtKB"/>
</dbReference>
<dbReference type="GO" id="GO:0048190">
    <property type="term" value="P:wing disc dorsal/ventral pattern formation"/>
    <property type="evidence" value="ECO:0000316"/>
    <property type="project" value="FlyBase"/>
</dbReference>
<dbReference type="FunFam" id="2.10.25.10:FF:000752">
    <property type="entry name" value="Draper, isoform D"/>
    <property type="match status" value="1"/>
</dbReference>
<dbReference type="FunFam" id="2.170.300.10:FF:000002">
    <property type="entry name" value="Multiple epidermal growth factor-like domains 10"/>
    <property type="match status" value="4"/>
</dbReference>
<dbReference type="Gene3D" id="2.10.25.140">
    <property type="match status" value="1"/>
</dbReference>
<dbReference type="Gene3D" id="2.170.300.10">
    <property type="entry name" value="Tie2 ligand-binding domain superfamily"/>
    <property type="match status" value="5"/>
</dbReference>
<dbReference type="InterPro" id="IPR000742">
    <property type="entry name" value="EGF-like_dom"/>
</dbReference>
<dbReference type="InterPro" id="IPR011489">
    <property type="entry name" value="EMI_domain"/>
</dbReference>
<dbReference type="InterPro" id="IPR002049">
    <property type="entry name" value="LE_dom"/>
</dbReference>
<dbReference type="InterPro" id="IPR042635">
    <property type="entry name" value="MEGF10/SREC1/2-like"/>
</dbReference>
<dbReference type="PANTHER" id="PTHR24043:SF8">
    <property type="entry name" value="EGF-LIKE DOMAIN-CONTAINING PROTEIN"/>
    <property type="match status" value="1"/>
</dbReference>
<dbReference type="PANTHER" id="PTHR24043">
    <property type="entry name" value="SCAVENGER RECEPTOR CLASS F"/>
    <property type="match status" value="1"/>
</dbReference>
<dbReference type="Pfam" id="PF00053">
    <property type="entry name" value="EGF_laminin"/>
    <property type="match status" value="5"/>
</dbReference>
<dbReference type="PRINTS" id="PR00011">
    <property type="entry name" value="EGFLAMININ"/>
</dbReference>
<dbReference type="SMART" id="SM00181">
    <property type="entry name" value="EGF"/>
    <property type="match status" value="14"/>
</dbReference>
<dbReference type="SMART" id="SM00180">
    <property type="entry name" value="EGF_Lam"/>
    <property type="match status" value="12"/>
</dbReference>
<dbReference type="PROSITE" id="PS00022">
    <property type="entry name" value="EGF_1"/>
    <property type="match status" value="13"/>
</dbReference>
<dbReference type="PROSITE" id="PS01186">
    <property type="entry name" value="EGF_2"/>
    <property type="match status" value="14"/>
</dbReference>
<dbReference type="PROSITE" id="PS50026">
    <property type="entry name" value="EGF_3"/>
    <property type="match status" value="10"/>
</dbReference>
<dbReference type="PROSITE" id="PS51041">
    <property type="entry name" value="EMI"/>
    <property type="match status" value="1"/>
</dbReference>
<comment type="function">
    <text evidence="6 7 8 9 10 11 12 13 14 15 16 17 19 20 21 22 23 24 25 26 27 28 30">Receptor which is involved in the phagocytosis of a variety of cells including apoptotic cells, severed and pruned axons, degenerating dendrites, salivary gland cells, germline cells and bacteria (PubMed:15342648, PubMed:16772168, PubMed:16772169, PubMed:18984163, PubMed:20577216, PubMed:22992958, PubMed:24412417). Binds to the ligand prtp which relocates from the endoplasmic reticulum to the cell surface during apoptosis (PubMed:19927123, PubMed:23337816). Ligand-binding may promote tyrosine phosphorylation mediated by Src42a, interaction with shark and subsequent activation of phagocytosis (PubMed:18432193). Also binds to the membrane phospholipid phosphatidylserine which is exposed on the surface of apoptotic cells (PubMed:23420848). Required for the phagocytosis of apoptotic cells by macrophages (PubMed:15342648). Also required for the phagocytosis of apoptotic neurons by glial cells in the embryonic nervous system (PubMed:12765609). Acts downstream of NimC4/simu in the glial phagocytosis of apoptotic neurons (PubMed:18455990). Plays a role in the glial engulfment of larval axons as part of programmed axon pruning during metamorphosis (PubMed:16772168, PubMed:16772170). Also mediates glial cell clearance of severed axons following axonal injury (PubMed:16772169, PubMed:27498858). Required for the engulfment of degenerating dendrites by epidermal cells (PubMed:24412417). Required in the ovary for the engulfment and subsequent processing of dying germline cells by follicular epithelial cells through activation of the JNK/bsk pathway (PubMed:22992958, PubMed:27347682). Plays a role in neuromuscular junction development by mediating the clearance of presynaptic debris and immature boutons which are shed by growing synapses (PubMed:19707574). Required for larval salivary gland cell death which occurs following a rise in steroid levels after puparium formation (PubMed:20577216). Also involved in bacterial phagocytosis (PubMed:18984163). Required for hemocyte phagocytosis of the Gram-positive bacterium S.aureus (PubMed:19890048). Lipoteichoic acid, synthesized by the S.aureus lipoteichoic acid synthase ltaS, acts as a ligand for drpr in this process (PubMed:19890048). Together with Src42a and shark, promotes the migration of macrophages to sites of wounding as part of a signaling cascade where Scr42a detects production of hydrogen peroxide at wound sites which triggers phosphorylation of drpr and subsequent recruitment and activation of shark (PubMed:26028435). Also required for macrophage priming which occurs following phagocytosis of apoptotic cells and ensures that macrophages develop a form of molecular memory that allows them to later mount an inflammatory response to tissue damage and bacterial infection (PubMed:27212238). Is also an essential factor in the regulation of muscle development and myogenesis, and as a consequence is required for normal locomotion (PubMed:12765609, PubMed:25111228, Ref.27). Likely to control the balance between skeletal muscle satellite cells proliferation and differentiation through regulation of the notch signaling pathway (PubMed:25111228, PubMed:30802937, Ref.27).</text>
</comment>
<comment type="function">
    <molecule>Isoform B</molecule>
    <text evidence="18">Promotes engulfment of axonal debris by glial cells following axonal injury.</text>
</comment>
<comment type="function">
    <molecule>Isoform A</molecule>
    <text evidence="18">Potently inhibits glial cell engulfment of axonal debris produced following axonal injury.</text>
</comment>
<comment type="subunit">
    <text evidence="8 11">Interacts (via the cytoplasmic domain) with shark; this is required for the recruitment of drpr and glial cells to severed axons and for the phagocytosis of axonal debris by glial cells following axon injury (PubMed:18432193). Interacts with ced-6 (PubMed:16772168).</text>
</comment>
<comment type="subunit">
    <molecule>Isoform A</molecule>
    <text evidence="18">Interacts with csw; this results in dephosphorylation of drpr isoform A which is required for the inhibition of glial cell engulfment of axonal debris produced following axonal injury (PubMed:22426252).</text>
</comment>
<comment type="interaction">
    <interactant intactId="EBI-107028">
        <id>Q9W0A0</id>
    </interactant>
    <interactant intactId="EBI-125861">
        <id>Q9VYV3</id>
        <label>prtp</label>
    </interactant>
    <organismsDiffer>false</organismsDiffer>
    <experiments>3</experiments>
</comment>
<comment type="interaction">
    <interactant intactId="EBI-107028">
        <id>Q9W0A0</id>
    </interactant>
    <interactant intactId="EBI-3403861">
        <id>Q24145</id>
        <label>Shark</label>
    </interactant>
    <organismsDiffer>false</organismsDiffer>
    <experiments>3</experiments>
</comment>
<comment type="subcellular location">
    <subcellularLocation>
        <location evidence="6 12 19">Cell membrane</location>
        <topology evidence="1">Single-pass type I membrane protein</topology>
    </subcellularLocation>
    <subcellularLocation>
        <location evidence="9">Cell projection</location>
        <location evidence="9">Axon</location>
    </subcellularLocation>
    <subcellularLocation>
        <location evidence="19">Cytoplasm</location>
    </subcellularLocation>
    <subcellularLocation>
        <location evidence="14 19">Postsynaptic cell membrane</location>
    </subcellularLocation>
    <subcellularLocation>
        <location evidence="25">Cytoplasm</location>
        <location evidence="25">Cell cortex</location>
    </subcellularLocation>
    <subcellularLocation>
        <location evidence="26">Cell projection</location>
        <location evidence="26">Phagocytic cup</location>
    </subcellularLocation>
    <subcellularLocation>
        <location evidence="26">Cytoplasmic vesicle</location>
        <location evidence="26">Phagosome</location>
    </subcellularLocation>
    <text evidence="9 19 25 26">In olfactory receptor neurons, expressed at low levels along the axon but is up-regulated at severed axons following injury (PubMed:16772169). In follicle cells, detected at the cell membrane and in punctate speckles within the cytoplasm (PubMed:22992958). Also detected in follicle cells on the phagocytic cup and on newly internalized phagosomes (PubMed:27347682). In stage 13 macrophages, localizes to punctae around engulfed cell corpses but by stage 15, relocates to the cell cortex (PubMed:27212238).</text>
</comment>
<comment type="alternative products">
    <event type="alternative splicing"/>
    <isoform>
        <id>Q9W0A0-1</id>
        <name evidence="36">B</name>
        <name evidence="32">Draper-I</name>
        <sequence type="displayed"/>
    </isoform>
    <isoform>
        <id>Q9W0A0-2</id>
        <name evidence="36">A</name>
        <name evidence="32">Draper-II</name>
        <sequence type="described" ref="VSP_058652 VSP_058653"/>
    </isoform>
    <isoform>
        <id>Q9W0A0-3</id>
        <name evidence="36">C</name>
        <name evidence="32">Draper-III</name>
        <sequence type="described" ref="VSP_058652 VSP_060222 VSP_060223"/>
    </isoform>
</comment>
<comment type="tissue specificity">
    <text evidence="8 9 12 17 18 19">Expressed in adult head (at protein level) (PubMed:22426252). Expressed in glia, macrophages and ectoderm (at protein level) (PubMed:18455990). Detected in glia around the mushroom body dorsal lobe and in glial processes infiltrating the medial lobe (at protein level) (PubMed:16772168). Expressed in adult brain glia including antennal lobe glia (at protein level) (PubMed:16772169). Expressed in the larval fat body (at protein level) (PubMed:20577216). Expressed in the ovary (at protein level) (PubMed:22992958). Isoform B: Predominant isoform in adult glia (PubMed:22426252).</text>
</comment>
<comment type="developmental stage">
    <text evidence="8 18 25">In glial cells around the mushroom body dorsal lobe, expression is weak in wandering larvae and pupae at 12 hours after puparium formation (APF) and is elevated in pupae at 6 hours APF (PubMed:16772168). In naive stage 11 macrophages, expressed at low levels with increased levels seen following apoptotic cell corpse uptake and a further increase observed by stage 15 (PubMed:27212238). Isoform A: Selectively expressed in adults (PubMed:22426252).</text>
</comment>
<comment type="induction">
    <text evidence="8 9 29">By axon injury which results in up-regulation on severed axons with levels reaching a peak between 12 and 24 hours after injury (at protein level) (PubMed:16772169). By ecdysone (PubMed:16772168). By detection of apoptotic cells (PubMed:34860835).</text>
</comment>
<comment type="domain">
    <text evidence="18">Isoform B: The intracellular domain is required for glial engulfment activity. Isoform A: The intracellular domain contains an 11-residue insertion compared to isoform B and is incapable of promoting glial engulfment.</text>
</comment>
<comment type="PTM">
    <text evidence="11 16 20 21">Phosphorylated on tyrosine residues (PubMed:18432193, PubMed:19927123, PubMed:23337816, PubMed:23420848). Phosphorylation is induced by binding to prtp (PubMed:19927123). It is also induced by binding to the membrane phospholipid phosphatidylserine (PubMed:23420848). Phosphorylation may be mediated directly or indirectly by Src42a and is required for interaction with shark (PubMed:18432193).</text>
</comment>
<comment type="PTM">
    <molecule>Isoform A</molecule>
    <text evidence="18">Dephosphorylated by csw which is required for the inhibition of glial cell engulfment of axonal debris produced following axonal injury.</text>
</comment>
<comment type="disruption phenotype">
    <text evidence="6 7 8 9 10 12 14 15 17 19 22 23 24">Embryos show no defects in early central nervous system (CNS) development but display defective CNS cell corpse engulfment (PubMed:12765609). Increased number and volume of apoptotic particles in the nerve cord (PubMed:18455990). Suppression of glial engulfment of larval axons which results in defective axon pruning with most larval axons remaining in the mushroom body dorsal lobe at 18 hours after puparium formation in contrast to the wild-type where most of the larval axons are pruned by this time (PubMed:16772168, PubMed:16772170). Failure of glia to respond to axon injury, resulting in severed axons not being cleared from the CNS (PubMed:16772169). Impaired clearance of degenerating dendrites (PubMed:24412417). Highly abnormal neuromuscular junctions characterized by reduced synaptic growth, the accumulation of presynaptic debris and pruned ghost boutons, and reduced larval mobility (PubMed:19707574). Significant defects in germ cell engulfment by follicle cells (PubMed:22992958). Defective larval salivary gland death with persistance of salivary gland material in 98% of mutants 24 hours after puparium formation (PubMed:20577216). Reduced hemocyte phagocytosis of S.aureus following infection with infected flies dying earlier than controls (PubMed:19890048). Following wounding, impaired migration of macrophages to wound sites (PubMed:26028435). Reduced lifespan (PubMed:25111228, Ref.27). Reduced climbing performance and impaired motor function with mutants displaying abnormal positioning of the legs and a rapid age-dependent decline in locomotor activity from 3 days to 7-10 days of adult life (PubMed:25111228). In 30-40 day old flies, pathological changes in thoracic skeletal muscle, such as loss of striation, variability in fiber size and vacuolization, that mainly affect the tergal depressor of the trochanter.(PubMed:25111228) Marked degeneration and vacuolization of the nervous system including brain and thoracic ventral ganglia, and degeneration of the retina and optic ganglia (PubMed:25111228). RNAi-mediated knockdown results in greatly reduced phagocytosis of apoptotic cells (PubMed:15342648). RNAi-mediated knockdown in neurons does not affect clearance of axon fragments resulting from developmental axon pruning but RNAi-mediated knockdown in glial cells results in defective clearance of axon fragments (PubMed:16772170). RNAi-mediated knockdown in the mesoderm or in adult precursor muscle cells results in impaired locomotor activity which is not seen following RNAi-mediated knockdown in neurons or glia (PubMed:25111228).</text>
</comment>
<comment type="similarity">
    <text evidence="33">Belongs to the MEGF family.</text>
</comment>
<accession>Q9W0A0</accession>
<accession>M9NEX8</accession>
<accession>Q1EC80</accession>
<accession>Q9W0A1</accession>
<name>DRPR_DROME</name>
<sequence>MLPVILIACLAQLVLAQADLKDLDGPNICKRRELYNVDVVYTELQSFQERGSTWCVTFPPRCSTYRIKHRVVNKTKTIAKNRIVRDCCDGYIASAGECVPHCSEPCQHGRCISPEKCKCDHGYGGPACDINCPPGWYGRNCSMQCDCLNNAVCEPFSGDCECAKGYTGARCADICPEGFFGANCSEKCRCENGGKCHHVSGECQCAPGFTGPLCDMRCPDGKHGAQCQQDCPCQNDGKCQPETGACMCNPGWTGDVCANKCPVGSYGPGCQESCECYKGAPCHHITGQCECPPGYRGERCFDECQLNTYGFNCSMTCDCANDAMCDRANGTCICNPGWTGAKCAERICEANKYGLDCNRTCECDMEHTDLCHPETGNCQCSIGWSSAQCTRPCTFLRYGPNCELTCNCKNGAKCSPVNGTCLCAPGWRGPTCEESCEPGTFGQDCALRCDCQNGAKCEPETGQCLCTAGWKNIKCDRPCDLNHFGQDCAKVCDCHNNAACNPQNGSCTCAAGWTGERCERKCDTGKFGHDCAQKCQCDFNNSLACDATNGRCVCKQDWGGVHCETNCRSGYYGENCDKVCRCLNNSSCDPDSGNCICSAGWTGADCAEPCPPGFYGMECKERCPEILHGNKSCDHITGEILCRTGYIGLTCEHPCPAGLYGPGCKLKCNCEHGGECNHVTGQCQCLPGWTGSNCNESCPTDTYGQGCAQRCRCVHHKVCRKADGMCICETGWSGTRCDEVCPEGFYGEHCMNTCACPSANFQCHAAHGCVCRSGYTGDNCDELIASQRIADQSENSSRASVALTLVLMTLFACIIFAVFIYYRRRVSNLKTEIAHVHYTHDTNPPSWPPNHNFDNPVYGMQAETRLLPNNMRSKMNNFDQRSTMSTDYGDDCNASGRVGSYSINYNHDLLTKNLNADRTNPIVYNESLKEEHVYDEIKHKEGYKDPDEYDHLDYSRPSTSQKPHYHRMNDAMLNINQDEEKPSNVKNMTVLLNKPLPPTEPEPQHECFDNTNTNLDNVSTASPSSSPKFLK</sequence>
<feature type="signal peptide" evidence="1">
    <location>
        <begin position="1"/>
        <end position="16"/>
    </location>
</feature>
<feature type="chain" id="PRO_5004335548" description="Protein draper" evidence="1">
    <location>
        <begin position="17"/>
        <end position="1031"/>
    </location>
</feature>
<feature type="topological domain" description="Extracellular" evidence="33">
    <location>
        <begin position="17"/>
        <end position="800"/>
    </location>
</feature>
<feature type="transmembrane region" description="Helical" evidence="1">
    <location>
        <begin position="801"/>
        <end position="821"/>
    </location>
</feature>
<feature type="topological domain" description="Cytoplasmic" evidence="33">
    <location>
        <begin position="822"/>
        <end position="1031"/>
    </location>
</feature>
<feature type="domain" description="EMI" evidence="3">
    <location>
        <begin position="25"/>
        <end position="100"/>
    </location>
</feature>
<feature type="domain" description="EGF-like 1" evidence="2">
    <location>
        <begin position="99"/>
        <end position="129"/>
    </location>
</feature>
<feature type="domain" description="EGF-like 2" evidence="2">
    <location>
        <begin position="137"/>
        <end position="172"/>
    </location>
</feature>
<feature type="domain" description="EGF-like 3" evidence="2">
    <location>
        <begin position="180"/>
        <end position="215"/>
    </location>
</feature>
<feature type="domain" description="EGF-like 4" evidence="2">
    <location>
        <begin position="223"/>
        <end position="258"/>
    </location>
</feature>
<feature type="domain" description="EGF-like 5" evidence="2">
    <location>
        <begin position="266"/>
        <end position="301"/>
    </location>
</feature>
<feature type="domain" description="EGF-like 6" evidence="2">
    <location>
        <begin position="309"/>
        <end position="344"/>
    </location>
</feature>
<feature type="domain" description="EGF-like 7" evidence="2">
    <location>
        <begin position="398"/>
        <end position="433"/>
    </location>
</feature>
<feature type="domain" description="EGF-like 8" evidence="2">
    <location>
        <begin position="484"/>
        <end position="519"/>
    </location>
</feature>
<feature type="domain" description="EGF-like 9" evidence="2">
    <location>
        <begin position="572"/>
        <end position="607"/>
    </location>
</feature>
<feature type="domain" description="EGF-like 10" evidence="2">
    <location>
        <begin position="660"/>
        <end position="695"/>
    </location>
</feature>
<feature type="region of interest" description="Disordered" evidence="5">
    <location>
        <begin position="940"/>
        <end position="964"/>
    </location>
</feature>
<feature type="region of interest" description="Disordered" evidence="5">
    <location>
        <begin position="989"/>
        <end position="1031"/>
    </location>
</feature>
<feature type="compositionally biased region" description="Basic and acidic residues" evidence="5">
    <location>
        <begin position="940"/>
        <end position="954"/>
    </location>
</feature>
<feature type="compositionally biased region" description="Polar residues" evidence="5">
    <location>
        <begin position="1009"/>
        <end position="1031"/>
    </location>
</feature>
<feature type="glycosylation site" description="N-linked (GlcNAc...) asparagine" evidence="4">
    <location>
        <position position="73"/>
    </location>
</feature>
<feature type="glycosylation site" description="N-linked (GlcNAc...) asparagine" evidence="4">
    <location>
        <position position="140"/>
    </location>
</feature>
<feature type="glycosylation site" description="N-linked (GlcNAc...) asparagine" evidence="4">
    <location>
        <position position="183"/>
    </location>
</feature>
<feature type="glycosylation site" description="N-linked (GlcNAc...) asparagine" evidence="4">
    <location>
        <position position="312"/>
    </location>
</feature>
<feature type="glycosylation site" description="N-linked (GlcNAc...) asparagine" evidence="4">
    <location>
        <position position="329"/>
    </location>
</feature>
<feature type="glycosylation site" description="N-linked (GlcNAc...) asparagine" evidence="4">
    <location>
        <position position="358"/>
    </location>
</feature>
<feature type="glycosylation site" description="N-linked (GlcNAc...) asparagine" evidence="4">
    <location>
        <position position="418"/>
    </location>
</feature>
<feature type="glycosylation site" description="N-linked (GlcNAc...) asparagine" evidence="4">
    <location>
        <position position="504"/>
    </location>
</feature>
<feature type="glycosylation site" description="N-linked (GlcNAc...) asparagine" evidence="4">
    <location>
        <position position="540"/>
    </location>
</feature>
<feature type="glycosylation site" description="N-linked (GlcNAc...) asparagine" evidence="4">
    <location>
        <position position="584"/>
    </location>
</feature>
<feature type="glycosylation site" description="N-linked (GlcNAc...) asparagine" evidence="4">
    <location>
        <position position="585"/>
    </location>
</feature>
<feature type="glycosylation site" description="N-linked (GlcNAc...) asparagine" evidence="4">
    <location>
        <position position="630"/>
    </location>
</feature>
<feature type="glycosylation site" description="N-linked (GlcNAc...) asparagine" evidence="4">
    <location>
        <position position="695"/>
    </location>
</feature>
<feature type="glycosylation site" description="N-linked (GlcNAc...) asparagine" evidence="4">
    <location>
        <position position="795"/>
    </location>
</feature>
<feature type="disulfide bond" evidence="3">
    <location>
        <begin position="29"/>
        <end position="88"/>
    </location>
</feature>
<feature type="disulfide bond" evidence="3">
    <location>
        <begin position="55"/>
        <end position="62"/>
    </location>
</feature>
<feature type="disulfide bond" evidence="3">
    <location>
        <begin position="87"/>
        <end position="98"/>
    </location>
</feature>
<feature type="disulfide bond" evidence="2">
    <location>
        <begin position="102"/>
        <end position="111"/>
    </location>
</feature>
<feature type="disulfide bond" evidence="2">
    <location>
        <begin position="106"/>
        <end position="117"/>
    </location>
</feature>
<feature type="disulfide bond" evidence="2">
    <location>
        <begin position="119"/>
        <end position="128"/>
    </location>
</feature>
<feature type="disulfide bond" evidence="2">
    <location>
        <begin position="141"/>
        <end position="153"/>
    </location>
</feature>
<feature type="disulfide bond" evidence="2">
    <location>
        <begin position="147"/>
        <end position="160"/>
    </location>
</feature>
<feature type="disulfide bond" evidence="2">
    <location>
        <begin position="162"/>
        <end position="171"/>
    </location>
</feature>
<feature type="disulfide bond" evidence="2">
    <location>
        <begin position="184"/>
        <end position="196"/>
    </location>
</feature>
<feature type="disulfide bond" evidence="2">
    <location>
        <begin position="190"/>
        <end position="203"/>
    </location>
</feature>
<feature type="disulfide bond" evidence="2">
    <location>
        <begin position="205"/>
        <end position="214"/>
    </location>
</feature>
<feature type="disulfide bond" evidence="2">
    <location>
        <begin position="227"/>
        <end position="239"/>
    </location>
</feature>
<feature type="disulfide bond" evidence="2">
    <location>
        <begin position="233"/>
        <end position="246"/>
    </location>
</feature>
<feature type="disulfide bond" evidence="2">
    <location>
        <begin position="248"/>
        <end position="257"/>
    </location>
</feature>
<feature type="disulfide bond" evidence="2">
    <location>
        <begin position="270"/>
        <end position="282"/>
    </location>
</feature>
<feature type="disulfide bond" evidence="2">
    <location>
        <begin position="276"/>
        <end position="289"/>
    </location>
</feature>
<feature type="disulfide bond" evidence="2">
    <location>
        <begin position="291"/>
        <end position="300"/>
    </location>
</feature>
<feature type="disulfide bond" evidence="2">
    <location>
        <begin position="313"/>
        <end position="325"/>
    </location>
</feature>
<feature type="disulfide bond" evidence="2">
    <location>
        <begin position="319"/>
        <end position="332"/>
    </location>
</feature>
<feature type="disulfide bond" evidence="2">
    <location>
        <begin position="334"/>
        <end position="343"/>
    </location>
</feature>
<feature type="disulfide bond" evidence="2">
    <location>
        <begin position="402"/>
        <end position="414"/>
    </location>
</feature>
<feature type="disulfide bond" evidence="2">
    <location>
        <begin position="408"/>
        <end position="421"/>
    </location>
</feature>
<feature type="disulfide bond" evidence="2">
    <location>
        <begin position="423"/>
        <end position="432"/>
    </location>
</feature>
<feature type="disulfide bond" evidence="2">
    <location>
        <begin position="488"/>
        <end position="500"/>
    </location>
</feature>
<feature type="disulfide bond" evidence="2">
    <location>
        <begin position="494"/>
        <end position="507"/>
    </location>
</feature>
<feature type="disulfide bond" evidence="2">
    <location>
        <begin position="509"/>
        <end position="518"/>
    </location>
</feature>
<feature type="disulfide bond" evidence="2">
    <location>
        <begin position="576"/>
        <end position="588"/>
    </location>
</feature>
<feature type="disulfide bond" evidence="2">
    <location>
        <begin position="582"/>
        <end position="595"/>
    </location>
</feature>
<feature type="disulfide bond" evidence="2">
    <location>
        <begin position="597"/>
        <end position="606"/>
    </location>
</feature>
<feature type="disulfide bond" evidence="2">
    <location>
        <begin position="664"/>
        <end position="676"/>
    </location>
</feature>
<feature type="disulfide bond" evidence="2">
    <location>
        <begin position="670"/>
        <end position="683"/>
    </location>
</feature>
<feature type="disulfide bond" evidence="2">
    <location>
        <begin position="685"/>
        <end position="694"/>
    </location>
</feature>
<feature type="splice variant" id="VSP_058652" description="In isoform A and isoform C.">
    <original>NCPPGWYGRNCSMQCDCLNNAVCEPFSGDCECAKGYTGARCADICPEGFFGANCSEKCRCENGGKCHHVSGECQCAPGFTGPLCDMRCPDGKHGAQCQQDCPCQNDGKCQPETGACMCNPGWTGDVCANKCPVGSYGPGCQESCECYKGAPCHHITGQCECPPGYRGERCFDECQLNTYGFNCSMTCDCANDAMCDRANGTCICNPGWTGAKCAERICEANKYGLDCNRTCECDMEHTDLCHPETGNCQCSIGWSSAQCTRPCTFLRYGPNCELTCNCKNGAKCSPVNGTCLCAPGWRGPTCEESCEPGTFGQDCALRCDCQNGAKCEPETGQCLCTAGWKNIKCDRPCDLNHFGQDCAKVCDCHNNAACNPQNGSCTCAAGWTGERCERKCDTGKFGHDCAQKCQCDFNNSLACDATNGRCVCKQDWGGVHCETNCRSGYYGENCDKV</original>
    <variation>I</variation>
    <location>
        <begin position="131"/>
        <end position="579"/>
    </location>
</feature>
<feature type="splice variant" id="VSP_058653" description="In isoform A.">
    <original>P</original>
    <variation>PVKIYSKILFPE</variation>
    <location>
        <position position="946"/>
    </location>
</feature>
<feature type="splice variant" id="VSP_060222" description="In isoform C.">
    <original>DEYDHLDYSRPSTSQKPHYHRMNDAMLNIN</original>
    <variation>GMSLDFYTGRLSNFTINYVLYICTHYGMNQ</variation>
    <location>
        <begin position="947"/>
        <end position="976"/>
    </location>
</feature>
<feature type="splice variant" id="VSP_060223" description="In isoform C.">
    <location>
        <begin position="977"/>
        <end position="1031"/>
    </location>
</feature>
<feature type="mutagenesis site" description="Protein still undergoes tyrosine phosphorylation but fails to rescue the defective phagocytosis caused by a loss of endogenous drpr." evidence="20">
    <original>Y</original>
    <variation>F</variation>
    <location>
        <position position="858"/>
    </location>
</feature>
<feature type="mutagenesis site" description="Markedly reduced interaction with shark. In contrast to the wild-type, does not rescue the ability of macrophages to migrate to a wound when expressed in drpr mutants. Protein still undergoes tyrosine phosphorylation and rescues the defective phagocytosis caused by a loss of endogenous drpr." evidence="11 20 24">
    <original>Y</original>
    <variation>F</variation>
    <location>
        <position position="949"/>
    </location>
</feature>
<feature type="sequence conflict" description="In Ref. 3; ABF85754." evidence="33" ref="3">
    <original>D</original>
    <variation>Y</variation>
    <location>
        <position position="577"/>
    </location>
</feature>
<gene>
    <name evidence="31 36" type="primary">drpr</name>
    <name type="synonym">Megf10</name>
    <name evidence="36" type="ORF">CG2086</name>
</gene>
<proteinExistence type="evidence at protein level"/>
<keyword id="KW-0025">Alternative splicing</keyword>
<keyword id="KW-1003">Cell membrane</keyword>
<keyword id="KW-0966">Cell projection</keyword>
<keyword id="KW-0963">Cytoplasm</keyword>
<keyword id="KW-0968">Cytoplasmic vesicle</keyword>
<keyword id="KW-1015">Disulfide bond</keyword>
<keyword id="KW-0245">EGF-like domain</keyword>
<keyword id="KW-0325">Glycoprotein</keyword>
<keyword id="KW-0472">Membrane</keyword>
<keyword id="KW-0581">Phagocytosis</keyword>
<keyword id="KW-0628">Postsynaptic cell membrane</keyword>
<keyword id="KW-0675">Receptor</keyword>
<keyword id="KW-1185">Reference proteome</keyword>
<keyword id="KW-0677">Repeat</keyword>
<keyword id="KW-0732">Signal</keyword>
<keyword id="KW-0770">Synapse</keyword>
<keyword id="KW-0812">Transmembrane</keyword>
<keyword id="KW-1133">Transmembrane helix</keyword>